<evidence type="ECO:0000250" key="1"/>
<evidence type="ECO:0000250" key="2">
    <source>
        <dbReference type="UniProtKB" id="P00157"/>
    </source>
</evidence>
<evidence type="ECO:0000255" key="3">
    <source>
        <dbReference type="PROSITE-ProRule" id="PRU00967"/>
    </source>
</evidence>
<evidence type="ECO:0000255" key="4">
    <source>
        <dbReference type="PROSITE-ProRule" id="PRU00968"/>
    </source>
</evidence>
<feature type="chain" id="PRO_0000061104" description="Cytochrome b">
    <location>
        <begin position="1"/>
        <end position="379"/>
    </location>
</feature>
<feature type="transmembrane region" description="Helical" evidence="2">
    <location>
        <begin position="33"/>
        <end position="53"/>
    </location>
</feature>
<feature type="transmembrane region" description="Helical" evidence="2">
    <location>
        <begin position="77"/>
        <end position="98"/>
    </location>
</feature>
<feature type="transmembrane region" description="Helical" evidence="2">
    <location>
        <begin position="113"/>
        <end position="133"/>
    </location>
</feature>
<feature type="transmembrane region" description="Helical" evidence="2">
    <location>
        <begin position="178"/>
        <end position="198"/>
    </location>
</feature>
<feature type="transmembrane region" description="Helical" evidence="2">
    <location>
        <begin position="226"/>
        <end position="246"/>
    </location>
</feature>
<feature type="transmembrane region" description="Helical" evidence="2">
    <location>
        <begin position="288"/>
        <end position="308"/>
    </location>
</feature>
<feature type="transmembrane region" description="Helical" evidence="2">
    <location>
        <begin position="320"/>
        <end position="340"/>
    </location>
</feature>
<feature type="transmembrane region" description="Helical" evidence="2">
    <location>
        <begin position="347"/>
        <end position="367"/>
    </location>
</feature>
<feature type="binding site" description="axial binding residue" evidence="2">
    <location>
        <position position="83"/>
    </location>
    <ligand>
        <name>heme b</name>
        <dbReference type="ChEBI" id="CHEBI:60344"/>
        <label>b562</label>
    </ligand>
    <ligandPart>
        <name>Fe</name>
        <dbReference type="ChEBI" id="CHEBI:18248"/>
    </ligandPart>
</feature>
<feature type="binding site" description="axial binding residue" evidence="2">
    <location>
        <position position="97"/>
    </location>
    <ligand>
        <name>heme b</name>
        <dbReference type="ChEBI" id="CHEBI:60344"/>
        <label>b566</label>
    </ligand>
    <ligandPart>
        <name>Fe</name>
        <dbReference type="ChEBI" id="CHEBI:18248"/>
    </ligandPart>
</feature>
<feature type="binding site" description="axial binding residue" evidence="2">
    <location>
        <position position="182"/>
    </location>
    <ligand>
        <name>heme b</name>
        <dbReference type="ChEBI" id="CHEBI:60344"/>
        <label>b562</label>
    </ligand>
    <ligandPart>
        <name>Fe</name>
        <dbReference type="ChEBI" id="CHEBI:18248"/>
    </ligandPart>
</feature>
<feature type="binding site" description="axial binding residue" evidence="2">
    <location>
        <position position="196"/>
    </location>
    <ligand>
        <name>heme b</name>
        <dbReference type="ChEBI" id="CHEBI:60344"/>
        <label>b566</label>
    </ligand>
    <ligandPart>
        <name>Fe</name>
        <dbReference type="ChEBI" id="CHEBI:18248"/>
    </ligandPart>
</feature>
<feature type="binding site" evidence="2">
    <location>
        <position position="201"/>
    </location>
    <ligand>
        <name>a ubiquinone</name>
        <dbReference type="ChEBI" id="CHEBI:16389"/>
    </ligand>
</feature>
<dbReference type="EMBL" id="AY441464">
    <property type="protein sequence ID" value="AAS00145.1"/>
    <property type="molecule type" value="Genomic_DNA"/>
</dbReference>
<dbReference type="SMR" id="Q5VJ49"/>
<dbReference type="GO" id="GO:0005743">
    <property type="term" value="C:mitochondrial inner membrane"/>
    <property type="evidence" value="ECO:0007669"/>
    <property type="project" value="UniProtKB-SubCell"/>
</dbReference>
<dbReference type="GO" id="GO:0045275">
    <property type="term" value="C:respiratory chain complex III"/>
    <property type="evidence" value="ECO:0007669"/>
    <property type="project" value="InterPro"/>
</dbReference>
<dbReference type="GO" id="GO:0046872">
    <property type="term" value="F:metal ion binding"/>
    <property type="evidence" value="ECO:0007669"/>
    <property type="project" value="UniProtKB-KW"/>
</dbReference>
<dbReference type="GO" id="GO:0008121">
    <property type="term" value="F:ubiquinol-cytochrome-c reductase activity"/>
    <property type="evidence" value="ECO:0007669"/>
    <property type="project" value="InterPro"/>
</dbReference>
<dbReference type="GO" id="GO:0006122">
    <property type="term" value="P:mitochondrial electron transport, ubiquinol to cytochrome c"/>
    <property type="evidence" value="ECO:0007669"/>
    <property type="project" value="TreeGrafter"/>
</dbReference>
<dbReference type="CDD" id="cd00290">
    <property type="entry name" value="cytochrome_b_C"/>
    <property type="match status" value="1"/>
</dbReference>
<dbReference type="CDD" id="cd00284">
    <property type="entry name" value="Cytochrome_b_N"/>
    <property type="match status" value="1"/>
</dbReference>
<dbReference type="FunFam" id="1.20.810.10:FF:000002">
    <property type="entry name" value="Cytochrome b"/>
    <property type="match status" value="1"/>
</dbReference>
<dbReference type="Gene3D" id="1.20.810.10">
    <property type="entry name" value="Cytochrome Bc1 Complex, Chain C"/>
    <property type="match status" value="1"/>
</dbReference>
<dbReference type="InterPro" id="IPR005798">
    <property type="entry name" value="Cyt_b/b6_C"/>
</dbReference>
<dbReference type="InterPro" id="IPR036150">
    <property type="entry name" value="Cyt_b/b6_C_sf"/>
</dbReference>
<dbReference type="InterPro" id="IPR005797">
    <property type="entry name" value="Cyt_b/b6_N"/>
</dbReference>
<dbReference type="InterPro" id="IPR027387">
    <property type="entry name" value="Cytb/b6-like_sf"/>
</dbReference>
<dbReference type="InterPro" id="IPR030689">
    <property type="entry name" value="Cytochrome_b"/>
</dbReference>
<dbReference type="InterPro" id="IPR048260">
    <property type="entry name" value="Cytochrome_b_C_euk/bac"/>
</dbReference>
<dbReference type="InterPro" id="IPR048259">
    <property type="entry name" value="Cytochrome_b_N_euk/bac"/>
</dbReference>
<dbReference type="InterPro" id="IPR016174">
    <property type="entry name" value="Di-haem_cyt_TM"/>
</dbReference>
<dbReference type="PANTHER" id="PTHR19271">
    <property type="entry name" value="CYTOCHROME B"/>
    <property type="match status" value="1"/>
</dbReference>
<dbReference type="PANTHER" id="PTHR19271:SF16">
    <property type="entry name" value="CYTOCHROME B"/>
    <property type="match status" value="1"/>
</dbReference>
<dbReference type="Pfam" id="PF00032">
    <property type="entry name" value="Cytochrom_B_C"/>
    <property type="match status" value="1"/>
</dbReference>
<dbReference type="Pfam" id="PF00033">
    <property type="entry name" value="Cytochrome_B"/>
    <property type="match status" value="1"/>
</dbReference>
<dbReference type="PIRSF" id="PIRSF038885">
    <property type="entry name" value="COB"/>
    <property type="match status" value="1"/>
</dbReference>
<dbReference type="SUPFAM" id="SSF81648">
    <property type="entry name" value="a domain/subunit of cytochrome bc1 complex (Ubiquinol-cytochrome c reductase)"/>
    <property type="match status" value="1"/>
</dbReference>
<dbReference type="SUPFAM" id="SSF81342">
    <property type="entry name" value="Transmembrane di-heme cytochromes"/>
    <property type="match status" value="1"/>
</dbReference>
<dbReference type="PROSITE" id="PS51003">
    <property type="entry name" value="CYTB_CTER"/>
    <property type="match status" value="1"/>
</dbReference>
<dbReference type="PROSITE" id="PS51002">
    <property type="entry name" value="CYTB_NTER"/>
    <property type="match status" value="1"/>
</dbReference>
<proteinExistence type="inferred from homology"/>
<keyword id="KW-0249">Electron transport</keyword>
<keyword id="KW-0349">Heme</keyword>
<keyword id="KW-0408">Iron</keyword>
<keyword id="KW-0472">Membrane</keyword>
<keyword id="KW-0479">Metal-binding</keyword>
<keyword id="KW-0496">Mitochondrion</keyword>
<keyword id="KW-0999">Mitochondrion inner membrane</keyword>
<keyword id="KW-0679">Respiratory chain</keyword>
<keyword id="KW-0812">Transmembrane</keyword>
<keyword id="KW-1133">Transmembrane helix</keyword>
<keyword id="KW-0813">Transport</keyword>
<keyword id="KW-0830">Ubiquinone</keyword>
<name>CYB_LEPDO</name>
<geneLocation type="mitochondrion"/>
<reference key="1">
    <citation type="submission" date="2003-10" db="EMBL/GenBank/DDBJ databases">
        <title>61 primate SINEs and the evolution of strepsirrhines.</title>
        <authorList>
            <person name="Roos C."/>
            <person name="Schmitz J."/>
            <person name="Zischler H."/>
        </authorList>
    </citation>
    <scope>NUCLEOTIDE SEQUENCE [GENOMIC DNA]</scope>
</reference>
<protein>
    <recommendedName>
        <fullName>Cytochrome b</fullName>
    </recommendedName>
    <alternativeName>
        <fullName>Complex III subunit 3</fullName>
    </alternativeName>
    <alternativeName>
        <fullName>Complex III subunit III</fullName>
    </alternativeName>
    <alternativeName>
        <fullName>Cytochrome b-c1 complex subunit 3</fullName>
    </alternativeName>
    <alternativeName>
        <fullName>Ubiquinol-cytochrome-c reductase complex cytochrome b subunit</fullName>
    </alternativeName>
</protein>
<comment type="function">
    <text evidence="2">Component of the ubiquinol-cytochrome c reductase complex (complex III or cytochrome b-c1 complex) that is part of the mitochondrial respiratory chain. The b-c1 complex mediates electron transfer from ubiquinol to cytochrome c. Contributes to the generation of a proton gradient across the mitochondrial membrane that is then used for ATP synthesis.</text>
</comment>
<comment type="cofactor">
    <cofactor evidence="2">
        <name>heme b</name>
        <dbReference type="ChEBI" id="CHEBI:60344"/>
    </cofactor>
    <text evidence="2">Binds 2 heme b groups non-covalently.</text>
</comment>
<comment type="subunit">
    <text evidence="2">The cytochrome bc1 complex contains 11 subunits: 3 respiratory subunits (MT-CYB, CYC1 and UQCRFS1), 2 core proteins (UQCRC1 and UQCRC2) and 6 low-molecular weight proteins (UQCRH/QCR6, UQCRB/QCR7, UQCRQ/QCR8, UQCR10/QCR9, UQCR11/QCR10 and a cleavage product of UQCRFS1). This cytochrome bc1 complex then forms a dimer.</text>
</comment>
<comment type="subcellular location">
    <subcellularLocation>
        <location evidence="2">Mitochondrion inner membrane</location>
        <topology evidence="2">Multi-pass membrane protein</topology>
    </subcellularLocation>
</comment>
<comment type="miscellaneous">
    <text evidence="1">Heme 1 (or BL or b562) is low-potential and absorbs at about 562 nm, and heme 2 (or BH or b566) is high-potential and absorbs at about 566 nm.</text>
</comment>
<comment type="similarity">
    <text evidence="3 4">Belongs to the cytochrome b family.</text>
</comment>
<comment type="caution">
    <text evidence="2">The full-length protein contains only eight transmembrane helices, not nine as predicted by bioinformatics tools.</text>
</comment>
<sequence>MTNIRKSHPLLKIINNSLIDLPTPPNISSLWNFGSLLGACLTIQIITGLFLAMHYTADTTTAFSSVAHICRDVNYGWTIRYLHANGASMFFLCLFIHVGRGLYYGSFTLLETWNVGIILLFSVMATAFMGYVLPWGQMSFWGATVITNLLSAIPYVGTDLVEWIWGGFSVSKATLTRFFALHFILPFIISALVMIHLLFLHETGSNNPLGMPSNSDKIPFHPYYTTKDFLGLLLLTLLLMTMALFYPDLLGDPDNYTPANPLNTPPHIKPEWYFLFAYAILRSIPNKLGGVMALILSILILMVIPFLQPNKQQTMMFRPLSQFLFWILVADLLTLTWIGGQPVEEPFINIGQMASMLYFSLMVFIMPTTCLIENKMLKW</sequence>
<gene>
    <name type="primary">MT-CYB</name>
    <name type="synonym">COB</name>
    <name type="synonym">CYTB</name>
    <name type="synonym">MTCYB</name>
</gene>
<organism>
    <name type="scientific">Lepilemur dorsalis</name>
    <name type="common">Grey-backed sportive lemur</name>
    <name type="synonym">Back-striped sportive lemur</name>
    <dbReference type="NCBI Taxonomy" id="78583"/>
    <lineage>
        <taxon>Eukaryota</taxon>
        <taxon>Metazoa</taxon>
        <taxon>Chordata</taxon>
        <taxon>Craniata</taxon>
        <taxon>Vertebrata</taxon>
        <taxon>Euteleostomi</taxon>
        <taxon>Mammalia</taxon>
        <taxon>Eutheria</taxon>
        <taxon>Euarchontoglires</taxon>
        <taxon>Primates</taxon>
        <taxon>Strepsirrhini</taxon>
        <taxon>Lemuriformes</taxon>
        <taxon>Lepilemuridae</taxon>
        <taxon>Lepilemur</taxon>
    </lineage>
</organism>
<accession>Q5VJ49</accession>